<organism>
    <name type="scientific">Xylella fastidiosa (strain 9a5c)</name>
    <dbReference type="NCBI Taxonomy" id="160492"/>
    <lineage>
        <taxon>Bacteria</taxon>
        <taxon>Pseudomonadati</taxon>
        <taxon>Pseudomonadota</taxon>
        <taxon>Gammaproteobacteria</taxon>
        <taxon>Lysobacterales</taxon>
        <taxon>Lysobacteraceae</taxon>
        <taxon>Xylella</taxon>
    </lineage>
</organism>
<protein>
    <recommendedName>
        <fullName>DNA repair protein RecN</fullName>
    </recommendedName>
    <alternativeName>
        <fullName>Recombination protein N</fullName>
    </alternativeName>
</protein>
<gene>
    <name type="primary">recN</name>
    <name type="ordered locus">XF_2343</name>
</gene>
<keyword id="KW-0067">ATP-binding</keyword>
<keyword id="KW-0227">DNA damage</keyword>
<keyword id="KW-0234">DNA repair</keyword>
<keyword id="KW-0547">Nucleotide-binding</keyword>
<evidence type="ECO:0000250" key="1"/>
<evidence type="ECO:0000255" key="2"/>
<evidence type="ECO:0000305" key="3"/>
<proteinExistence type="inferred from homology"/>
<dbReference type="EMBL" id="AE003849">
    <property type="protein sequence ID" value="AAF85142.1"/>
    <property type="molecule type" value="Genomic_DNA"/>
</dbReference>
<dbReference type="PIR" id="B82571">
    <property type="entry name" value="B82571"/>
</dbReference>
<dbReference type="RefSeq" id="WP_010894789.1">
    <property type="nucleotide sequence ID" value="NC_002488.3"/>
</dbReference>
<dbReference type="SMR" id="Q9PB02"/>
<dbReference type="STRING" id="160492.XF_2343"/>
<dbReference type="KEGG" id="xfa:XF_2343"/>
<dbReference type="eggNOG" id="COG0497">
    <property type="taxonomic scope" value="Bacteria"/>
</dbReference>
<dbReference type="HOGENOM" id="CLU_018297_3_1_6"/>
<dbReference type="Proteomes" id="UP000000812">
    <property type="component" value="Chromosome"/>
</dbReference>
<dbReference type="GO" id="GO:0043590">
    <property type="term" value="C:bacterial nucleoid"/>
    <property type="evidence" value="ECO:0007669"/>
    <property type="project" value="TreeGrafter"/>
</dbReference>
<dbReference type="GO" id="GO:0005524">
    <property type="term" value="F:ATP binding"/>
    <property type="evidence" value="ECO:0007669"/>
    <property type="project" value="UniProtKB-KW"/>
</dbReference>
<dbReference type="GO" id="GO:0016887">
    <property type="term" value="F:ATP hydrolysis activity"/>
    <property type="evidence" value="ECO:0007669"/>
    <property type="project" value="InterPro"/>
</dbReference>
<dbReference type="GO" id="GO:0006310">
    <property type="term" value="P:DNA recombination"/>
    <property type="evidence" value="ECO:0007669"/>
    <property type="project" value="InterPro"/>
</dbReference>
<dbReference type="GO" id="GO:0006302">
    <property type="term" value="P:double-strand break repair"/>
    <property type="evidence" value="ECO:0007669"/>
    <property type="project" value="InterPro"/>
</dbReference>
<dbReference type="GO" id="GO:0009432">
    <property type="term" value="P:SOS response"/>
    <property type="evidence" value="ECO:0007669"/>
    <property type="project" value="TreeGrafter"/>
</dbReference>
<dbReference type="CDD" id="cd03241">
    <property type="entry name" value="ABC_RecN"/>
    <property type="match status" value="2"/>
</dbReference>
<dbReference type="FunFam" id="3.40.50.300:FF:000319">
    <property type="entry name" value="DNA repair protein RecN"/>
    <property type="match status" value="1"/>
</dbReference>
<dbReference type="FunFam" id="3.40.50.300:FF:000356">
    <property type="entry name" value="DNA repair protein RecN"/>
    <property type="match status" value="1"/>
</dbReference>
<dbReference type="Gene3D" id="3.40.50.300">
    <property type="entry name" value="P-loop containing nucleotide triphosphate hydrolases"/>
    <property type="match status" value="2"/>
</dbReference>
<dbReference type="InterPro" id="IPR004604">
    <property type="entry name" value="DNA_recomb/repair_RecN"/>
</dbReference>
<dbReference type="InterPro" id="IPR027417">
    <property type="entry name" value="P-loop_NTPase"/>
</dbReference>
<dbReference type="InterPro" id="IPR038729">
    <property type="entry name" value="Rad50/SbcC_AAA"/>
</dbReference>
<dbReference type="InterPro" id="IPR003395">
    <property type="entry name" value="RecF/RecN/SMC_N"/>
</dbReference>
<dbReference type="NCBIfam" id="NF008121">
    <property type="entry name" value="PRK10869.1"/>
    <property type="match status" value="1"/>
</dbReference>
<dbReference type="NCBIfam" id="TIGR00634">
    <property type="entry name" value="recN"/>
    <property type="match status" value="1"/>
</dbReference>
<dbReference type="PANTHER" id="PTHR11059">
    <property type="entry name" value="DNA REPAIR PROTEIN RECN"/>
    <property type="match status" value="1"/>
</dbReference>
<dbReference type="PANTHER" id="PTHR11059:SF0">
    <property type="entry name" value="DNA REPAIR PROTEIN RECN"/>
    <property type="match status" value="1"/>
</dbReference>
<dbReference type="Pfam" id="PF13476">
    <property type="entry name" value="AAA_23"/>
    <property type="match status" value="1"/>
</dbReference>
<dbReference type="Pfam" id="PF02463">
    <property type="entry name" value="SMC_N"/>
    <property type="match status" value="1"/>
</dbReference>
<dbReference type="PIRSF" id="PIRSF003128">
    <property type="entry name" value="RecN"/>
    <property type="match status" value="1"/>
</dbReference>
<dbReference type="SUPFAM" id="SSF52540">
    <property type="entry name" value="P-loop containing nucleoside triphosphate hydrolases"/>
    <property type="match status" value="1"/>
</dbReference>
<feature type="chain" id="PRO_0000188030" description="DNA repair protein RecN">
    <location>
        <begin position="1"/>
        <end position="557"/>
    </location>
</feature>
<feature type="binding site" evidence="2">
    <location>
        <begin position="29"/>
        <end position="36"/>
    </location>
    <ligand>
        <name>ATP</name>
        <dbReference type="ChEBI" id="CHEBI:30616"/>
    </ligand>
</feature>
<accession>Q9PB02</accession>
<comment type="function">
    <text evidence="1">May be involved in recombinational repair of damaged DNA.</text>
</comment>
<comment type="similarity">
    <text evidence="3">Belongs to the RecN family.</text>
</comment>
<reference key="1">
    <citation type="journal article" date="2000" name="Nature">
        <title>The genome sequence of the plant pathogen Xylella fastidiosa.</title>
        <authorList>
            <person name="Simpson A.J.G."/>
            <person name="Reinach F.C."/>
            <person name="Arruda P."/>
            <person name="Abreu F.A."/>
            <person name="Acencio M."/>
            <person name="Alvarenga R."/>
            <person name="Alves L.M.C."/>
            <person name="Araya J.E."/>
            <person name="Baia G.S."/>
            <person name="Baptista C.S."/>
            <person name="Barros M.H."/>
            <person name="Bonaccorsi E.D."/>
            <person name="Bordin S."/>
            <person name="Bove J.M."/>
            <person name="Briones M.R.S."/>
            <person name="Bueno M.R.P."/>
            <person name="Camargo A.A."/>
            <person name="Camargo L.E.A."/>
            <person name="Carraro D.M."/>
            <person name="Carrer H."/>
            <person name="Colauto N.B."/>
            <person name="Colombo C."/>
            <person name="Costa F.F."/>
            <person name="Costa M.C.R."/>
            <person name="Costa-Neto C.M."/>
            <person name="Coutinho L.L."/>
            <person name="Cristofani M."/>
            <person name="Dias-Neto E."/>
            <person name="Docena C."/>
            <person name="El-Dorry H."/>
            <person name="Facincani A.P."/>
            <person name="Ferreira A.J.S."/>
            <person name="Ferreira V.C.A."/>
            <person name="Ferro J.A."/>
            <person name="Fraga J.S."/>
            <person name="Franca S.C."/>
            <person name="Franco M.C."/>
            <person name="Frohme M."/>
            <person name="Furlan L.R."/>
            <person name="Garnier M."/>
            <person name="Goldman G.H."/>
            <person name="Goldman M.H.S."/>
            <person name="Gomes S.L."/>
            <person name="Gruber A."/>
            <person name="Ho P.L."/>
            <person name="Hoheisel J.D."/>
            <person name="Junqueira M.L."/>
            <person name="Kemper E.L."/>
            <person name="Kitajima J.P."/>
            <person name="Krieger J.E."/>
            <person name="Kuramae E.E."/>
            <person name="Laigret F."/>
            <person name="Lambais M.R."/>
            <person name="Leite L.C.C."/>
            <person name="Lemos E.G.M."/>
            <person name="Lemos M.V.F."/>
            <person name="Lopes S.A."/>
            <person name="Lopes C.R."/>
            <person name="Machado J.A."/>
            <person name="Machado M.A."/>
            <person name="Madeira A.M.B.N."/>
            <person name="Madeira H.M.F."/>
            <person name="Marino C.L."/>
            <person name="Marques M.V."/>
            <person name="Martins E.A.L."/>
            <person name="Martins E.M.F."/>
            <person name="Matsukuma A.Y."/>
            <person name="Menck C.F.M."/>
            <person name="Miracca E.C."/>
            <person name="Miyaki C.Y."/>
            <person name="Monteiro-Vitorello C.B."/>
            <person name="Moon D.H."/>
            <person name="Nagai M.A."/>
            <person name="Nascimento A.L.T.O."/>
            <person name="Netto L.E.S."/>
            <person name="Nhani A. Jr."/>
            <person name="Nobrega F.G."/>
            <person name="Nunes L.R."/>
            <person name="Oliveira M.A."/>
            <person name="de Oliveira M.C."/>
            <person name="de Oliveira R.C."/>
            <person name="Palmieri D.A."/>
            <person name="Paris A."/>
            <person name="Peixoto B.R."/>
            <person name="Pereira G.A.G."/>
            <person name="Pereira H.A. Jr."/>
            <person name="Pesquero J.B."/>
            <person name="Quaggio R.B."/>
            <person name="Roberto P.G."/>
            <person name="Rodrigues V."/>
            <person name="de Rosa A.J.M."/>
            <person name="de Rosa V.E. Jr."/>
            <person name="de Sa R.G."/>
            <person name="Santelli R.V."/>
            <person name="Sawasaki H.E."/>
            <person name="da Silva A.C.R."/>
            <person name="da Silva A.M."/>
            <person name="da Silva F.R."/>
            <person name="Silva W.A. Jr."/>
            <person name="da Silveira J.F."/>
            <person name="Silvestri M.L.Z."/>
            <person name="Siqueira W.J."/>
            <person name="de Souza A.A."/>
            <person name="de Souza A.P."/>
            <person name="Terenzi M.F."/>
            <person name="Truffi D."/>
            <person name="Tsai S.M."/>
            <person name="Tsuhako M.H."/>
            <person name="Vallada H."/>
            <person name="Van Sluys M.A."/>
            <person name="Verjovski-Almeida S."/>
            <person name="Vettore A.L."/>
            <person name="Zago M.A."/>
            <person name="Zatz M."/>
            <person name="Meidanis J."/>
            <person name="Setubal J.C."/>
        </authorList>
    </citation>
    <scope>NUCLEOTIDE SEQUENCE [LARGE SCALE GENOMIC DNA]</scope>
    <source>
        <strain>9a5c</strain>
    </source>
</reference>
<sequence>MLRHLTIKDFAVVRNIELEFGPGMTVVSGETGAGKSLIIDALGFLSGLRADSSVVRHGAERAELSAEFNITIHHPARVWLRNVELDDADQCQLRRIIRADGGSRAWINARPVTLSQLSDLATHLVEIHGQHEHQTLLSRQSQLVLLDAYAQNETERDAVQQAAAHWQALLDERDALQAQGDMSERINFIEHQLTELQRENLDPATITALDASHRRQAHTAALIEACKNTTQTLNGDDTTSALHLLHAARHTLSRVTEHDARLGEVETLLDNAMIQVDEALTLLDRIHNDLNIDPEQLEAIELRIGRLHSLARKYRCTPLDLAAQRDRMAAEVESMRNMDIHLQQLDHRISNAMTKWRQAAEKLSISRTRAAAALSTTTTNLINELGMGGGQLLIQLQPHENNRPHPNGAERTEFLIATNPGQPPRPLRKIASGGELSRVSLAIMVAALGLDTVPTMVFDEVDTGIGGAIADIVGQKLRALGEQHQVLCVTHLPQVAAKGHTHYRVSKIPIDGITQSAICLLDSQERQEEIARMLGGVHISKEAHAAAGKLLQELQEM</sequence>
<name>RECN_XYLFA</name>